<feature type="chain" id="PRO_0000209420" description="Protein/nucleic acid deglycase HchA">
    <location>
        <begin position="1"/>
        <end position="292"/>
    </location>
</feature>
<feature type="region of interest" description="Disordered" evidence="2">
    <location>
        <begin position="1"/>
        <end position="23"/>
    </location>
</feature>
<feature type="compositionally biased region" description="Polar residues" evidence="2">
    <location>
        <begin position="1"/>
        <end position="12"/>
    </location>
</feature>
<feature type="active site" description="Nucleophile" evidence="1">
    <location>
        <position position="190"/>
    </location>
</feature>
<proteinExistence type="inferred from homology"/>
<protein>
    <recommendedName>
        <fullName evidence="1">Protein/nucleic acid deglycase HchA</fullName>
        <ecNumber evidence="1">3.1.2.-</ecNumber>
        <ecNumber evidence="1">3.5.1.-</ecNumber>
        <ecNumber evidence="1">3.5.1.124</ecNumber>
    </recommendedName>
    <alternativeName>
        <fullName evidence="1">Maillard deglycase</fullName>
    </alternativeName>
</protein>
<gene>
    <name evidence="1" type="primary">hchA</name>
    <name type="ordered locus">SAV0551</name>
</gene>
<comment type="function">
    <text evidence="1">Protein and nucleotide deglycase that catalyzes the deglycation of the Maillard adducts formed between amino groups of proteins or nucleotides and reactive carbonyl groups of glyoxals. Thus, functions as a protein deglycase that repairs methylglyoxal- and glyoxal-glycated proteins, and releases repaired proteins and lactate or glycolate, respectively. Deglycates cysteine, arginine and lysine residues in proteins, and thus reactivates these proteins by reversing glycation by glyoxals. Acts on early glycation intermediates (hemithioacetals and aminocarbinols), preventing the formation of Schiff bases and advanced glycation endproducts (AGE). Also functions as a nucleotide deglycase able to repair glycated guanine in the free nucleotide pool (GTP, GDP, GMP, dGTP) and in DNA and RNA. Is thus involved in a major nucleotide repair system named guanine glycation repair (GG repair), dedicated to reversing methylglyoxal and glyoxal damage via nucleotide sanitization and direct nucleic acid repair. Plays an important role in protecting cells from carbonyl stress.</text>
</comment>
<comment type="catalytic activity">
    <reaction evidence="1">
        <text>N(omega)-(1-hydroxy-2-oxopropyl)-L-arginyl-[protein] + H2O = lactate + L-arginyl-[protein] + H(+)</text>
        <dbReference type="Rhea" id="RHEA:49548"/>
        <dbReference type="Rhea" id="RHEA-COMP:10532"/>
        <dbReference type="Rhea" id="RHEA-COMP:12428"/>
        <dbReference type="ChEBI" id="CHEBI:15377"/>
        <dbReference type="ChEBI" id="CHEBI:15378"/>
        <dbReference type="ChEBI" id="CHEBI:24996"/>
        <dbReference type="ChEBI" id="CHEBI:29965"/>
        <dbReference type="ChEBI" id="CHEBI:131708"/>
        <dbReference type="EC" id="3.5.1.124"/>
    </reaction>
</comment>
<comment type="catalytic activity">
    <reaction evidence="1">
        <text>N(6)-(1-hydroxy-2-oxopropyl)-L-lysyl-[protein] + H2O = lactate + L-lysyl-[protein] + H(+)</text>
        <dbReference type="Rhea" id="RHEA:49552"/>
        <dbReference type="Rhea" id="RHEA-COMP:9752"/>
        <dbReference type="Rhea" id="RHEA-COMP:12429"/>
        <dbReference type="ChEBI" id="CHEBI:15377"/>
        <dbReference type="ChEBI" id="CHEBI:15378"/>
        <dbReference type="ChEBI" id="CHEBI:24996"/>
        <dbReference type="ChEBI" id="CHEBI:29969"/>
        <dbReference type="ChEBI" id="CHEBI:131709"/>
        <dbReference type="EC" id="3.5.1.124"/>
    </reaction>
</comment>
<comment type="catalytic activity">
    <reaction evidence="1">
        <text>S-(1-hydroxy-2-oxopropyl)-L-cysteinyl-[protein] + H2O = lactate + L-cysteinyl-[protein] + H(+)</text>
        <dbReference type="Rhea" id="RHEA:49556"/>
        <dbReference type="Rhea" id="RHEA-COMP:10131"/>
        <dbReference type="Rhea" id="RHEA-COMP:12430"/>
        <dbReference type="ChEBI" id="CHEBI:15377"/>
        <dbReference type="ChEBI" id="CHEBI:15378"/>
        <dbReference type="ChEBI" id="CHEBI:24996"/>
        <dbReference type="ChEBI" id="CHEBI:29950"/>
        <dbReference type="ChEBI" id="CHEBI:131710"/>
        <dbReference type="EC" id="3.5.1.124"/>
    </reaction>
</comment>
<comment type="catalytic activity">
    <reaction evidence="1">
        <text>N(omega)-(1-hydroxy-2-oxoethyl)-L-arginyl-[protein] + H2O = L-arginyl-[protein] + glycolate + H(+)</text>
        <dbReference type="Rhea" id="RHEA:57188"/>
        <dbReference type="Rhea" id="RHEA-COMP:10532"/>
        <dbReference type="Rhea" id="RHEA-COMP:14844"/>
        <dbReference type="ChEBI" id="CHEBI:15377"/>
        <dbReference type="ChEBI" id="CHEBI:15378"/>
        <dbReference type="ChEBI" id="CHEBI:29805"/>
        <dbReference type="ChEBI" id="CHEBI:29965"/>
        <dbReference type="ChEBI" id="CHEBI:141553"/>
        <dbReference type="EC" id="3.5.1.124"/>
    </reaction>
</comment>
<comment type="catalytic activity">
    <reaction evidence="1">
        <text>N(6)-(1-hydroxy-2-oxoethyl)-L-lysyl-[protein] + H2O = glycolate + L-lysyl-[protein] + H(+)</text>
        <dbReference type="Rhea" id="RHEA:57192"/>
        <dbReference type="Rhea" id="RHEA-COMP:9752"/>
        <dbReference type="Rhea" id="RHEA-COMP:14845"/>
        <dbReference type="ChEBI" id="CHEBI:15377"/>
        <dbReference type="ChEBI" id="CHEBI:15378"/>
        <dbReference type="ChEBI" id="CHEBI:29805"/>
        <dbReference type="ChEBI" id="CHEBI:29969"/>
        <dbReference type="ChEBI" id="CHEBI:141554"/>
        <dbReference type="EC" id="3.5.1.124"/>
    </reaction>
</comment>
<comment type="catalytic activity">
    <reaction evidence="1">
        <text>S-(1-hydroxy-2-oxoethyl)-L-cysteinyl-[protein] + H2O = glycolate + L-cysteinyl-[protein] + H(+)</text>
        <dbReference type="Rhea" id="RHEA:57196"/>
        <dbReference type="Rhea" id="RHEA-COMP:10131"/>
        <dbReference type="Rhea" id="RHEA-COMP:14846"/>
        <dbReference type="ChEBI" id="CHEBI:15377"/>
        <dbReference type="ChEBI" id="CHEBI:15378"/>
        <dbReference type="ChEBI" id="CHEBI:29805"/>
        <dbReference type="ChEBI" id="CHEBI:29950"/>
        <dbReference type="ChEBI" id="CHEBI:141555"/>
        <dbReference type="EC" id="3.5.1.124"/>
    </reaction>
</comment>
<comment type="catalytic activity">
    <reaction evidence="1">
        <text>N(2)-(1-hydroxy-2-oxopropyl)-dGTP + H2O = lactate + dGTP + H(+)</text>
        <dbReference type="Rhea" id="RHEA:57244"/>
        <dbReference type="ChEBI" id="CHEBI:15377"/>
        <dbReference type="ChEBI" id="CHEBI:15378"/>
        <dbReference type="ChEBI" id="CHEBI:24996"/>
        <dbReference type="ChEBI" id="CHEBI:61429"/>
        <dbReference type="ChEBI" id="CHEBI:141569"/>
    </reaction>
</comment>
<comment type="catalytic activity">
    <reaction evidence="1">
        <text>N(2)-(1-hydroxy-2-oxopropyl)-GTP + H2O = lactate + GTP + H(+)</text>
        <dbReference type="Rhea" id="RHEA:57256"/>
        <dbReference type="ChEBI" id="CHEBI:15377"/>
        <dbReference type="ChEBI" id="CHEBI:15378"/>
        <dbReference type="ChEBI" id="CHEBI:24996"/>
        <dbReference type="ChEBI" id="CHEBI:37565"/>
        <dbReference type="ChEBI" id="CHEBI:141570"/>
    </reaction>
</comment>
<comment type="catalytic activity">
    <reaction evidence="1">
        <text>N(2)-(1-hydroxy-2-oxopropyl)-GDP + H2O = lactate + GDP + H(+)</text>
        <dbReference type="Rhea" id="RHEA:57260"/>
        <dbReference type="ChEBI" id="CHEBI:15377"/>
        <dbReference type="ChEBI" id="CHEBI:15378"/>
        <dbReference type="ChEBI" id="CHEBI:24996"/>
        <dbReference type="ChEBI" id="CHEBI:58189"/>
        <dbReference type="ChEBI" id="CHEBI:141573"/>
    </reaction>
</comment>
<comment type="catalytic activity">
    <reaction evidence="1">
        <text>N(2)-(1-hydroxy-2-oxopropyl)-GMP + H2O = lactate + GMP + H(+)</text>
        <dbReference type="Rhea" id="RHEA:57268"/>
        <dbReference type="ChEBI" id="CHEBI:15377"/>
        <dbReference type="ChEBI" id="CHEBI:15378"/>
        <dbReference type="ChEBI" id="CHEBI:24996"/>
        <dbReference type="ChEBI" id="CHEBI:58115"/>
        <dbReference type="ChEBI" id="CHEBI:141575"/>
    </reaction>
</comment>
<comment type="catalytic activity">
    <reaction evidence="1">
        <text>N(2)-(1-hydroxy-2-oxoethyl)-dGTP + H2O = dGTP + glycolate + H(+)</text>
        <dbReference type="Rhea" id="RHEA:57248"/>
        <dbReference type="ChEBI" id="CHEBI:15377"/>
        <dbReference type="ChEBI" id="CHEBI:15378"/>
        <dbReference type="ChEBI" id="CHEBI:29805"/>
        <dbReference type="ChEBI" id="CHEBI:61429"/>
        <dbReference type="ChEBI" id="CHEBI:141572"/>
    </reaction>
</comment>
<comment type="catalytic activity">
    <reaction evidence="1">
        <text>N(2)-(1-hydroxy-2-oxoethyl)-GTP + H2O = glycolate + GTP + H(+)</text>
        <dbReference type="Rhea" id="RHEA:57252"/>
        <dbReference type="ChEBI" id="CHEBI:15377"/>
        <dbReference type="ChEBI" id="CHEBI:15378"/>
        <dbReference type="ChEBI" id="CHEBI:29805"/>
        <dbReference type="ChEBI" id="CHEBI:37565"/>
        <dbReference type="ChEBI" id="CHEBI:141571"/>
    </reaction>
</comment>
<comment type="catalytic activity">
    <reaction evidence="1">
        <text>N(2)-(1-hydroxy-2-oxoethyl)-GDP + H2O = glycolate + GDP + H(+)</text>
        <dbReference type="Rhea" id="RHEA:57264"/>
        <dbReference type="ChEBI" id="CHEBI:15377"/>
        <dbReference type="ChEBI" id="CHEBI:15378"/>
        <dbReference type="ChEBI" id="CHEBI:29805"/>
        <dbReference type="ChEBI" id="CHEBI:58189"/>
        <dbReference type="ChEBI" id="CHEBI:141574"/>
    </reaction>
</comment>
<comment type="catalytic activity">
    <reaction evidence="1">
        <text>N(2)-(1-hydroxy-2-oxoethyl)-GMP + H2O = glycolate + GMP + H(+)</text>
        <dbReference type="Rhea" id="RHEA:57304"/>
        <dbReference type="ChEBI" id="CHEBI:15377"/>
        <dbReference type="ChEBI" id="CHEBI:15378"/>
        <dbReference type="ChEBI" id="CHEBI:29805"/>
        <dbReference type="ChEBI" id="CHEBI:58115"/>
        <dbReference type="ChEBI" id="CHEBI:141576"/>
    </reaction>
</comment>
<comment type="catalytic activity">
    <reaction evidence="1">
        <text>an N(2)-(1-hydroxy-2-oxopropyl)-guanosine in RNA + H2O = a guanosine in RNA + lactate + H(+)</text>
        <dbReference type="Rhea" id="RHEA:57288"/>
        <dbReference type="Rhea" id="RHEA-COMP:14855"/>
        <dbReference type="Rhea" id="RHEA-COMP:14858"/>
        <dbReference type="ChEBI" id="CHEBI:15377"/>
        <dbReference type="ChEBI" id="CHEBI:15378"/>
        <dbReference type="ChEBI" id="CHEBI:24996"/>
        <dbReference type="ChEBI" id="CHEBI:74269"/>
        <dbReference type="ChEBI" id="CHEBI:141580"/>
    </reaction>
</comment>
<comment type="catalytic activity">
    <reaction evidence="1">
        <text>an N(2)-(1-hydroxy-2-oxopropyl)-2'-deoxyguanosine in DNA + H2O = a 2'-deoxyguanosine in DNA + lactate + H(+)</text>
        <dbReference type="Rhea" id="RHEA:57300"/>
        <dbReference type="Rhea" id="RHEA-COMP:11367"/>
        <dbReference type="Rhea" id="RHEA-COMP:14856"/>
        <dbReference type="ChEBI" id="CHEBI:15377"/>
        <dbReference type="ChEBI" id="CHEBI:15378"/>
        <dbReference type="ChEBI" id="CHEBI:24996"/>
        <dbReference type="ChEBI" id="CHEBI:85445"/>
        <dbReference type="ChEBI" id="CHEBI:141578"/>
    </reaction>
</comment>
<comment type="catalytic activity">
    <reaction evidence="1">
        <text>an N(2)-(1-hydroxy-2-oxoethyl)-guanosine in RNA + H2O = a guanosine in RNA + glycolate + H(+)</text>
        <dbReference type="Rhea" id="RHEA:57292"/>
        <dbReference type="Rhea" id="RHEA-COMP:14855"/>
        <dbReference type="Rhea" id="RHEA-COMP:14859"/>
        <dbReference type="ChEBI" id="CHEBI:15377"/>
        <dbReference type="ChEBI" id="CHEBI:15378"/>
        <dbReference type="ChEBI" id="CHEBI:29805"/>
        <dbReference type="ChEBI" id="CHEBI:74269"/>
        <dbReference type="ChEBI" id="CHEBI:141581"/>
    </reaction>
</comment>
<comment type="catalytic activity">
    <reaction evidence="1">
        <text>an N(2)-(1-hydroxy-2-oxoethyl)-2'-deoxyguanosine in DNA + H2O = a 2'-deoxyguanosine in DNA + glycolate + H(+)</text>
        <dbReference type="Rhea" id="RHEA:57296"/>
        <dbReference type="Rhea" id="RHEA-COMP:11367"/>
        <dbReference type="Rhea" id="RHEA-COMP:14857"/>
        <dbReference type="ChEBI" id="CHEBI:15377"/>
        <dbReference type="ChEBI" id="CHEBI:15378"/>
        <dbReference type="ChEBI" id="CHEBI:29805"/>
        <dbReference type="ChEBI" id="CHEBI:85445"/>
        <dbReference type="ChEBI" id="CHEBI:141579"/>
    </reaction>
</comment>
<comment type="subcellular location">
    <subcellularLocation>
        <location evidence="1">Cytoplasm</location>
    </subcellularLocation>
</comment>
<comment type="similarity">
    <text evidence="1">Belongs to the peptidase C56 family. HchA subfamily.</text>
</comment>
<keyword id="KW-0963">Cytoplasm</keyword>
<keyword id="KW-0227">DNA damage</keyword>
<keyword id="KW-0234">DNA repair</keyword>
<keyword id="KW-0378">Hydrolase</keyword>
<keyword id="KW-0346">Stress response</keyword>
<organism>
    <name type="scientific">Staphylococcus aureus (strain Mu50 / ATCC 700699)</name>
    <dbReference type="NCBI Taxonomy" id="158878"/>
    <lineage>
        <taxon>Bacteria</taxon>
        <taxon>Bacillati</taxon>
        <taxon>Bacillota</taxon>
        <taxon>Bacilli</taxon>
        <taxon>Bacillales</taxon>
        <taxon>Staphylococcaceae</taxon>
        <taxon>Staphylococcus</taxon>
    </lineage>
</organism>
<sequence length="292" mass="32177">MSQDVNELSKQPTPDKAEDNAFFPSPYSLSQYTAPKTDFDGVEHKGAYKDGKWKVLMIAAEERYVLLENGKMFSTGNHPVEMLLPLHHLMEAGFDVDVATLSGYPVKLELWAMPTEDEAVISTYNKLKEKLKQPKKLADVIKNELGPDSDYLSVFIPGGHAAVVGISESEDVQQTLDWALDNDRFIVTLCHGPAALLSAGLNREKSPLEGYSVCVFPDSLDEGANIEIGYLPGRLKWLVADLLTKQGLKVVNDDMTGRTLKDRKLLTGDSPLASNELGKLAVNEMLNAIQNK</sequence>
<reference key="1">
    <citation type="journal article" date="2001" name="Lancet">
        <title>Whole genome sequencing of meticillin-resistant Staphylococcus aureus.</title>
        <authorList>
            <person name="Kuroda M."/>
            <person name="Ohta T."/>
            <person name="Uchiyama I."/>
            <person name="Baba T."/>
            <person name="Yuzawa H."/>
            <person name="Kobayashi I."/>
            <person name="Cui L."/>
            <person name="Oguchi A."/>
            <person name="Aoki K."/>
            <person name="Nagai Y."/>
            <person name="Lian J.-Q."/>
            <person name="Ito T."/>
            <person name="Kanamori M."/>
            <person name="Matsumaru H."/>
            <person name="Maruyama A."/>
            <person name="Murakami H."/>
            <person name="Hosoyama A."/>
            <person name="Mizutani-Ui Y."/>
            <person name="Takahashi N.K."/>
            <person name="Sawano T."/>
            <person name="Inoue R."/>
            <person name="Kaito C."/>
            <person name="Sekimizu K."/>
            <person name="Hirakawa H."/>
            <person name="Kuhara S."/>
            <person name="Goto S."/>
            <person name="Yabuzaki J."/>
            <person name="Kanehisa M."/>
            <person name="Yamashita A."/>
            <person name="Oshima K."/>
            <person name="Furuya K."/>
            <person name="Yoshino C."/>
            <person name="Shiba T."/>
            <person name="Hattori M."/>
            <person name="Ogasawara N."/>
            <person name="Hayashi H."/>
            <person name="Hiramatsu K."/>
        </authorList>
    </citation>
    <scope>NUCLEOTIDE SEQUENCE [LARGE SCALE GENOMIC DNA]</scope>
    <source>
        <strain>Mu50 / ATCC 700699</strain>
    </source>
</reference>
<dbReference type="EC" id="3.1.2.-" evidence="1"/>
<dbReference type="EC" id="3.5.1.-" evidence="1"/>
<dbReference type="EC" id="3.5.1.124" evidence="1"/>
<dbReference type="EMBL" id="BA000017">
    <property type="protein sequence ID" value="BAB56713.1"/>
    <property type="molecule type" value="Genomic_DNA"/>
</dbReference>
<dbReference type="RefSeq" id="WP_000076404.1">
    <property type="nucleotide sequence ID" value="NC_002758.2"/>
</dbReference>
<dbReference type="SMR" id="P64312"/>
<dbReference type="MEROPS" id="C56.006"/>
<dbReference type="KEGG" id="sav:SAV0551"/>
<dbReference type="HOGENOM" id="CLU_066933_0_0_9"/>
<dbReference type="PhylomeDB" id="P64312"/>
<dbReference type="BRENDA" id="4.2.1.130">
    <property type="organism ID" value="3352"/>
</dbReference>
<dbReference type="Proteomes" id="UP000002481">
    <property type="component" value="Chromosome"/>
</dbReference>
<dbReference type="GO" id="GO:0005737">
    <property type="term" value="C:cytoplasm"/>
    <property type="evidence" value="ECO:0007669"/>
    <property type="project" value="UniProtKB-SubCell"/>
</dbReference>
<dbReference type="GO" id="GO:0019172">
    <property type="term" value="F:glyoxalase III activity"/>
    <property type="evidence" value="ECO:0007669"/>
    <property type="project" value="TreeGrafter"/>
</dbReference>
<dbReference type="GO" id="GO:0036524">
    <property type="term" value="F:protein deglycase activity"/>
    <property type="evidence" value="ECO:0007669"/>
    <property type="project" value="UniProtKB-UniRule"/>
</dbReference>
<dbReference type="GO" id="GO:0016790">
    <property type="term" value="F:thiolester hydrolase activity"/>
    <property type="evidence" value="ECO:0007669"/>
    <property type="project" value="UniProtKB-UniRule"/>
</dbReference>
<dbReference type="GO" id="GO:0006281">
    <property type="term" value="P:DNA repair"/>
    <property type="evidence" value="ECO:0007669"/>
    <property type="project" value="UniProtKB-UniRule"/>
</dbReference>
<dbReference type="GO" id="GO:0019243">
    <property type="term" value="P:methylglyoxal catabolic process to D-lactate via S-lactoyl-glutathione"/>
    <property type="evidence" value="ECO:0007669"/>
    <property type="project" value="TreeGrafter"/>
</dbReference>
<dbReference type="GO" id="GO:0030091">
    <property type="term" value="P:protein repair"/>
    <property type="evidence" value="ECO:0007669"/>
    <property type="project" value="UniProtKB-UniRule"/>
</dbReference>
<dbReference type="CDD" id="cd03148">
    <property type="entry name" value="GATase1_EcHsp31_like"/>
    <property type="match status" value="1"/>
</dbReference>
<dbReference type="Gene3D" id="3.40.50.880">
    <property type="match status" value="1"/>
</dbReference>
<dbReference type="HAMAP" id="MF_01046">
    <property type="entry name" value="Deglycase_HchA"/>
    <property type="match status" value="1"/>
</dbReference>
<dbReference type="InterPro" id="IPR029062">
    <property type="entry name" value="Class_I_gatase-like"/>
</dbReference>
<dbReference type="InterPro" id="IPR002818">
    <property type="entry name" value="DJ-1/PfpI"/>
</dbReference>
<dbReference type="InterPro" id="IPR017283">
    <property type="entry name" value="HchA"/>
</dbReference>
<dbReference type="InterPro" id="IPR050325">
    <property type="entry name" value="Prot/Nucl_acid_deglycase"/>
</dbReference>
<dbReference type="NCBIfam" id="NF003168">
    <property type="entry name" value="PRK04155.1"/>
    <property type="match status" value="1"/>
</dbReference>
<dbReference type="PANTHER" id="PTHR48094">
    <property type="entry name" value="PROTEIN/NUCLEIC ACID DEGLYCASE DJ-1-RELATED"/>
    <property type="match status" value="1"/>
</dbReference>
<dbReference type="PANTHER" id="PTHR48094:SF20">
    <property type="entry name" value="PROTEIN_NUCLEIC ACID DEGLYCASE 1"/>
    <property type="match status" value="1"/>
</dbReference>
<dbReference type="Pfam" id="PF01965">
    <property type="entry name" value="DJ-1_PfpI"/>
    <property type="match status" value="1"/>
</dbReference>
<dbReference type="PIRSF" id="PIRSF037798">
    <property type="entry name" value="Chaperone_HchA"/>
    <property type="match status" value="1"/>
</dbReference>
<dbReference type="SUPFAM" id="SSF52317">
    <property type="entry name" value="Class I glutamine amidotransferase-like"/>
    <property type="match status" value="1"/>
</dbReference>
<evidence type="ECO:0000255" key="1">
    <source>
        <dbReference type="HAMAP-Rule" id="MF_01046"/>
    </source>
</evidence>
<evidence type="ECO:0000256" key="2">
    <source>
        <dbReference type="SAM" id="MobiDB-lite"/>
    </source>
</evidence>
<name>HCHA_STAAM</name>
<accession>P64312</accession>
<accession>Q99W58</accession>